<feature type="chain" id="PRO_1000114776" description="Imidazole glycerol phosphate synthase subunit HisH">
    <location>
        <begin position="1"/>
        <end position="209"/>
    </location>
</feature>
<feature type="domain" description="Glutamine amidotransferase type-1" evidence="1">
    <location>
        <begin position="1"/>
        <end position="205"/>
    </location>
</feature>
<feature type="active site" description="Nucleophile" evidence="1">
    <location>
        <position position="79"/>
    </location>
</feature>
<feature type="active site" evidence="1">
    <location>
        <position position="180"/>
    </location>
</feature>
<feature type="active site" evidence="1">
    <location>
        <position position="182"/>
    </location>
</feature>
<name>HIS5_BACMK</name>
<protein>
    <recommendedName>
        <fullName evidence="1">Imidazole glycerol phosphate synthase subunit HisH</fullName>
        <ecNumber evidence="1">4.3.2.10</ecNumber>
    </recommendedName>
    <alternativeName>
        <fullName evidence="1">IGP synthase glutaminase subunit</fullName>
        <ecNumber evidence="1">3.5.1.2</ecNumber>
    </alternativeName>
    <alternativeName>
        <fullName evidence="1">IGP synthase subunit HisH</fullName>
    </alternativeName>
    <alternativeName>
        <fullName evidence="1">ImGP synthase subunit HisH</fullName>
        <shortName evidence="1">IGPS subunit HisH</shortName>
    </alternativeName>
</protein>
<proteinExistence type="inferred from homology"/>
<accession>A9VLH5</accession>
<keyword id="KW-0028">Amino-acid biosynthesis</keyword>
<keyword id="KW-0963">Cytoplasm</keyword>
<keyword id="KW-0315">Glutamine amidotransferase</keyword>
<keyword id="KW-0368">Histidine biosynthesis</keyword>
<keyword id="KW-0378">Hydrolase</keyword>
<keyword id="KW-0456">Lyase</keyword>
<dbReference type="EC" id="4.3.2.10" evidence="1"/>
<dbReference type="EC" id="3.5.1.2" evidence="1"/>
<dbReference type="EMBL" id="CP000903">
    <property type="protein sequence ID" value="ABY42577.1"/>
    <property type="molecule type" value="Genomic_DNA"/>
</dbReference>
<dbReference type="RefSeq" id="WP_002011707.1">
    <property type="nucleotide sequence ID" value="NC_010184.1"/>
</dbReference>
<dbReference type="SMR" id="A9VLH5"/>
<dbReference type="KEGG" id="bwe:BcerKBAB4_1330"/>
<dbReference type="eggNOG" id="COG0118">
    <property type="taxonomic scope" value="Bacteria"/>
</dbReference>
<dbReference type="HOGENOM" id="CLU_071837_2_2_9"/>
<dbReference type="UniPathway" id="UPA00031">
    <property type="reaction ID" value="UER00010"/>
</dbReference>
<dbReference type="Proteomes" id="UP000002154">
    <property type="component" value="Chromosome"/>
</dbReference>
<dbReference type="GO" id="GO:0005737">
    <property type="term" value="C:cytoplasm"/>
    <property type="evidence" value="ECO:0007669"/>
    <property type="project" value="UniProtKB-SubCell"/>
</dbReference>
<dbReference type="GO" id="GO:0004359">
    <property type="term" value="F:glutaminase activity"/>
    <property type="evidence" value="ECO:0007669"/>
    <property type="project" value="UniProtKB-EC"/>
</dbReference>
<dbReference type="GO" id="GO:0000107">
    <property type="term" value="F:imidazoleglycerol-phosphate synthase activity"/>
    <property type="evidence" value="ECO:0007669"/>
    <property type="project" value="UniProtKB-UniRule"/>
</dbReference>
<dbReference type="GO" id="GO:0016829">
    <property type="term" value="F:lyase activity"/>
    <property type="evidence" value="ECO:0007669"/>
    <property type="project" value="UniProtKB-KW"/>
</dbReference>
<dbReference type="GO" id="GO:0000105">
    <property type="term" value="P:L-histidine biosynthetic process"/>
    <property type="evidence" value="ECO:0007669"/>
    <property type="project" value="UniProtKB-UniRule"/>
</dbReference>
<dbReference type="CDD" id="cd01748">
    <property type="entry name" value="GATase1_IGP_Synthase"/>
    <property type="match status" value="1"/>
</dbReference>
<dbReference type="FunFam" id="3.40.50.880:FF:000028">
    <property type="entry name" value="Imidazole glycerol phosphate synthase subunit HisH"/>
    <property type="match status" value="1"/>
</dbReference>
<dbReference type="Gene3D" id="3.40.50.880">
    <property type="match status" value="1"/>
</dbReference>
<dbReference type="HAMAP" id="MF_00278">
    <property type="entry name" value="HisH"/>
    <property type="match status" value="1"/>
</dbReference>
<dbReference type="InterPro" id="IPR029062">
    <property type="entry name" value="Class_I_gatase-like"/>
</dbReference>
<dbReference type="InterPro" id="IPR017926">
    <property type="entry name" value="GATASE"/>
</dbReference>
<dbReference type="InterPro" id="IPR010139">
    <property type="entry name" value="Imidazole-glycPsynth_HisH"/>
</dbReference>
<dbReference type="NCBIfam" id="TIGR01855">
    <property type="entry name" value="IMP_synth_hisH"/>
    <property type="match status" value="1"/>
</dbReference>
<dbReference type="PANTHER" id="PTHR42701">
    <property type="entry name" value="IMIDAZOLE GLYCEROL PHOSPHATE SYNTHASE SUBUNIT HISH"/>
    <property type="match status" value="1"/>
</dbReference>
<dbReference type="PANTHER" id="PTHR42701:SF1">
    <property type="entry name" value="IMIDAZOLE GLYCEROL PHOSPHATE SYNTHASE SUBUNIT HISH"/>
    <property type="match status" value="1"/>
</dbReference>
<dbReference type="Pfam" id="PF00117">
    <property type="entry name" value="GATase"/>
    <property type="match status" value="1"/>
</dbReference>
<dbReference type="PIRSF" id="PIRSF000495">
    <property type="entry name" value="Amidotransf_hisH"/>
    <property type="match status" value="1"/>
</dbReference>
<dbReference type="SUPFAM" id="SSF52317">
    <property type="entry name" value="Class I glutamine amidotransferase-like"/>
    <property type="match status" value="1"/>
</dbReference>
<dbReference type="PROSITE" id="PS51273">
    <property type="entry name" value="GATASE_TYPE_1"/>
    <property type="match status" value="1"/>
</dbReference>
<reference key="1">
    <citation type="journal article" date="2008" name="Chem. Biol. Interact.">
        <title>Extending the Bacillus cereus group genomics to putative food-borne pathogens of different toxicity.</title>
        <authorList>
            <person name="Lapidus A."/>
            <person name="Goltsman E."/>
            <person name="Auger S."/>
            <person name="Galleron N."/>
            <person name="Segurens B."/>
            <person name="Dossat C."/>
            <person name="Land M.L."/>
            <person name="Broussolle V."/>
            <person name="Brillard J."/>
            <person name="Guinebretiere M.-H."/>
            <person name="Sanchis V."/>
            <person name="Nguen-the C."/>
            <person name="Lereclus D."/>
            <person name="Richardson P."/>
            <person name="Wincker P."/>
            <person name="Weissenbach J."/>
            <person name="Ehrlich S.D."/>
            <person name="Sorokin A."/>
        </authorList>
    </citation>
    <scope>NUCLEOTIDE SEQUENCE [LARGE SCALE GENOMIC DNA]</scope>
    <source>
        <strain>KBAB4</strain>
    </source>
</reference>
<sequence>MIAIIDYGMGNIRSVEQALKYIGTEYIITDDKKEILRSDGVILPGVGTFPKAMGVLEEKDLVCVLKEVGSLGKPLLGICLGMQLLFEKSEELQNCNGLNLLPGVIRKLKVPYKIPHMGWNELKKEGEISLWNGVEDGSFVYYVHSYYADCPNEIVYGASEYGVKVPGFVAKGNIFGAQFHPEKSGEIGMRMLKNFKGVVEAWKSSQLSI</sequence>
<comment type="function">
    <text evidence="1">IGPS catalyzes the conversion of PRFAR and glutamine to IGP, AICAR and glutamate. The HisH subunit catalyzes the hydrolysis of glutamine to glutamate and ammonia as part of the synthesis of IGP and AICAR. The resulting ammonia molecule is channeled to the active site of HisF.</text>
</comment>
<comment type="catalytic activity">
    <reaction evidence="1">
        <text>5-[(5-phospho-1-deoxy-D-ribulos-1-ylimino)methylamino]-1-(5-phospho-beta-D-ribosyl)imidazole-4-carboxamide + L-glutamine = D-erythro-1-(imidazol-4-yl)glycerol 3-phosphate + 5-amino-1-(5-phospho-beta-D-ribosyl)imidazole-4-carboxamide + L-glutamate + H(+)</text>
        <dbReference type="Rhea" id="RHEA:24793"/>
        <dbReference type="ChEBI" id="CHEBI:15378"/>
        <dbReference type="ChEBI" id="CHEBI:29985"/>
        <dbReference type="ChEBI" id="CHEBI:58278"/>
        <dbReference type="ChEBI" id="CHEBI:58359"/>
        <dbReference type="ChEBI" id="CHEBI:58475"/>
        <dbReference type="ChEBI" id="CHEBI:58525"/>
        <dbReference type="EC" id="4.3.2.10"/>
    </reaction>
</comment>
<comment type="catalytic activity">
    <reaction evidence="1">
        <text>L-glutamine + H2O = L-glutamate + NH4(+)</text>
        <dbReference type="Rhea" id="RHEA:15889"/>
        <dbReference type="ChEBI" id="CHEBI:15377"/>
        <dbReference type="ChEBI" id="CHEBI:28938"/>
        <dbReference type="ChEBI" id="CHEBI:29985"/>
        <dbReference type="ChEBI" id="CHEBI:58359"/>
        <dbReference type="EC" id="3.5.1.2"/>
    </reaction>
</comment>
<comment type="pathway">
    <text evidence="1">Amino-acid biosynthesis; L-histidine biosynthesis; L-histidine from 5-phospho-alpha-D-ribose 1-diphosphate: step 5/9.</text>
</comment>
<comment type="subunit">
    <text evidence="1">Heterodimer of HisH and HisF.</text>
</comment>
<comment type="subcellular location">
    <subcellularLocation>
        <location evidence="1">Cytoplasm</location>
    </subcellularLocation>
</comment>
<organism>
    <name type="scientific">Bacillus mycoides (strain KBAB4)</name>
    <name type="common">Bacillus weihenstephanensis</name>
    <dbReference type="NCBI Taxonomy" id="315730"/>
    <lineage>
        <taxon>Bacteria</taxon>
        <taxon>Bacillati</taxon>
        <taxon>Bacillota</taxon>
        <taxon>Bacilli</taxon>
        <taxon>Bacillales</taxon>
        <taxon>Bacillaceae</taxon>
        <taxon>Bacillus</taxon>
        <taxon>Bacillus cereus group</taxon>
    </lineage>
</organism>
<evidence type="ECO:0000255" key="1">
    <source>
        <dbReference type="HAMAP-Rule" id="MF_00278"/>
    </source>
</evidence>
<gene>
    <name evidence="1" type="primary">hisH</name>
    <name type="ordered locus">BcerKBAB4_1330</name>
</gene>